<name>METN3_PECAS</name>
<dbReference type="EC" id="7.4.2.11" evidence="1"/>
<dbReference type="EMBL" id="BX950851">
    <property type="protein sequence ID" value="CAG76422.1"/>
    <property type="molecule type" value="Genomic_DNA"/>
</dbReference>
<dbReference type="RefSeq" id="WP_011095029.1">
    <property type="nucleotide sequence ID" value="NC_004547.2"/>
</dbReference>
<dbReference type="SMR" id="Q6D1C4"/>
<dbReference type="STRING" id="218491.ECA3524"/>
<dbReference type="GeneID" id="57210198"/>
<dbReference type="KEGG" id="eca:ECA3524"/>
<dbReference type="PATRIC" id="fig|218491.5.peg.3570"/>
<dbReference type="eggNOG" id="COG1135">
    <property type="taxonomic scope" value="Bacteria"/>
</dbReference>
<dbReference type="HOGENOM" id="CLU_000604_1_3_6"/>
<dbReference type="OrthoDB" id="9802264at2"/>
<dbReference type="Proteomes" id="UP000007966">
    <property type="component" value="Chromosome"/>
</dbReference>
<dbReference type="GO" id="GO:0009276">
    <property type="term" value="C:Gram-negative-bacterium-type cell wall"/>
    <property type="evidence" value="ECO:0007669"/>
    <property type="project" value="InterPro"/>
</dbReference>
<dbReference type="GO" id="GO:0005886">
    <property type="term" value="C:plasma membrane"/>
    <property type="evidence" value="ECO:0007669"/>
    <property type="project" value="UniProtKB-SubCell"/>
</dbReference>
<dbReference type="GO" id="GO:0033232">
    <property type="term" value="F:ABC-type D-methionine transporter activity"/>
    <property type="evidence" value="ECO:0007669"/>
    <property type="project" value="UniProtKB-EC"/>
</dbReference>
<dbReference type="GO" id="GO:0005524">
    <property type="term" value="F:ATP binding"/>
    <property type="evidence" value="ECO:0007669"/>
    <property type="project" value="UniProtKB-KW"/>
</dbReference>
<dbReference type="GO" id="GO:0016887">
    <property type="term" value="F:ATP hydrolysis activity"/>
    <property type="evidence" value="ECO:0007669"/>
    <property type="project" value="InterPro"/>
</dbReference>
<dbReference type="CDD" id="cd03258">
    <property type="entry name" value="ABC_MetN_methionine_transporter"/>
    <property type="match status" value="1"/>
</dbReference>
<dbReference type="FunFam" id="3.40.50.300:FF:000233">
    <property type="entry name" value="Methionine import ATP-binding protein MetN"/>
    <property type="match status" value="1"/>
</dbReference>
<dbReference type="Gene3D" id="3.30.70.260">
    <property type="match status" value="1"/>
</dbReference>
<dbReference type="Gene3D" id="3.40.50.300">
    <property type="entry name" value="P-loop containing nucleotide triphosphate hydrolases"/>
    <property type="match status" value="1"/>
</dbReference>
<dbReference type="InterPro" id="IPR003593">
    <property type="entry name" value="AAA+_ATPase"/>
</dbReference>
<dbReference type="InterPro" id="IPR012692">
    <property type="entry name" value="ABC_MetN_proteobac"/>
</dbReference>
<dbReference type="InterPro" id="IPR003439">
    <property type="entry name" value="ABC_transporter-like_ATP-bd"/>
</dbReference>
<dbReference type="InterPro" id="IPR017871">
    <property type="entry name" value="ABC_transporter-like_CS"/>
</dbReference>
<dbReference type="InterPro" id="IPR045865">
    <property type="entry name" value="ACT-like_dom_sf"/>
</dbReference>
<dbReference type="InterPro" id="IPR041701">
    <property type="entry name" value="MetN_ABC"/>
</dbReference>
<dbReference type="InterPro" id="IPR050086">
    <property type="entry name" value="MetN_ABC_transporter-like"/>
</dbReference>
<dbReference type="InterPro" id="IPR018449">
    <property type="entry name" value="NIL_domain"/>
</dbReference>
<dbReference type="InterPro" id="IPR027417">
    <property type="entry name" value="P-loop_NTPase"/>
</dbReference>
<dbReference type="NCBIfam" id="TIGR02314">
    <property type="entry name" value="ABC_MetN"/>
    <property type="match status" value="1"/>
</dbReference>
<dbReference type="PANTHER" id="PTHR43166">
    <property type="entry name" value="AMINO ACID IMPORT ATP-BINDING PROTEIN"/>
    <property type="match status" value="1"/>
</dbReference>
<dbReference type="PANTHER" id="PTHR43166:SF30">
    <property type="entry name" value="METHIONINE IMPORT ATP-BINDING PROTEIN METN"/>
    <property type="match status" value="1"/>
</dbReference>
<dbReference type="Pfam" id="PF00005">
    <property type="entry name" value="ABC_tran"/>
    <property type="match status" value="1"/>
</dbReference>
<dbReference type="Pfam" id="PF09383">
    <property type="entry name" value="NIL"/>
    <property type="match status" value="1"/>
</dbReference>
<dbReference type="SMART" id="SM00382">
    <property type="entry name" value="AAA"/>
    <property type="match status" value="1"/>
</dbReference>
<dbReference type="SMART" id="SM00930">
    <property type="entry name" value="NIL"/>
    <property type="match status" value="1"/>
</dbReference>
<dbReference type="SUPFAM" id="SSF55021">
    <property type="entry name" value="ACT-like"/>
    <property type="match status" value="1"/>
</dbReference>
<dbReference type="SUPFAM" id="SSF52540">
    <property type="entry name" value="P-loop containing nucleoside triphosphate hydrolases"/>
    <property type="match status" value="1"/>
</dbReference>
<dbReference type="PROSITE" id="PS00211">
    <property type="entry name" value="ABC_TRANSPORTER_1"/>
    <property type="match status" value="1"/>
</dbReference>
<dbReference type="PROSITE" id="PS50893">
    <property type="entry name" value="ABC_TRANSPORTER_2"/>
    <property type="match status" value="1"/>
</dbReference>
<dbReference type="PROSITE" id="PS51264">
    <property type="entry name" value="METN"/>
    <property type="match status" value="1"/>
</dbReference>
<keyword id="KW-0029">Amino-acid transport</keyword>
<keyword id="KW-0067">ATP-binding</keyword>
<keyword id="KW-0997">Cell inner membrane</keyword>
<keyword id="KW-1003">Cell membrane</keyword>
<keyword id="KW-0472">Membrane</keyword>
<keyword id="KW-0547">Nucleotide-binding</keyword>
<keyword id="KW-1185">Reference proteome</keyword>
<keyword id="KW-1278">Translocase</keyword>
<keyword id="KW-0813">Transport</keyword>
<gene>
    <name evidence="1" type="primary">metN3</name>
    <name type="ordered locus">ECA3524</name>
</gene>
<protein>
    <recommendedName>
        <fullName evidence="1">Methionine import ATP-binding protein MetN 3</fullName>
        <ecNumber evidence="1">7.4.2.11</ecNumber>
    </recommendedName>
</protein>
<comment type="function">
    <text evidence="1">Part of the ABC transporter complex MetNIQ involved in methionine import. Responsible for energy coupling to the transport system.</text>
</comment>
<comment type="catalytic activity">
    <reaction evidence="1">
        <text>L-methionine(out) + ATP + H2O = L-methionine(in) + ADP + phosphate + H(+)</text>
        <dbReference type="Rhea" id="RHEA:29779"/>
        <dbReference type="ChEBI" id="CHEBI:15377"/>
        <dbReference type="ChEBI" id="CHEBI:15378"/>
        <dbReference type="ChEBI" id="CHEBI:30616"/>
        <dbReference type="ChEBI" id="CHEBI:43474"/>
        <dbReference type="ChEBI" id="CHEBI:57844"/>
        <dbReference type="ChEBI" id="CHEBI:456216"/>
        <dbReference type="EC" id="7.4.2.11"/>
    </reaction>
</comment>
<comment type="catalytic activity">
    <reaction evidence="1">
        <text>D-methionine(out) + ATP + H2O = D-methionine(in) + ADP + phosphate + H(+)</text>
        <dbReference type="Rhea" id="RHEA:29767"/>
        <dbReference type="ChEBI" id="CHEBI:15377"/>
        <dbReference type="ChEBI" id="CHEBI:15378"/>
        <dbReference type="ChEBI" id="CHEBI:30616"/>
        <dbReference type="ChEBI" id="CHEBI:43474"/>
        <dbReference type="ChEBI" id="CHEBI:57932"/>
        <dbReference type="ChEBI" id="CHEBI:456216"/>
        <dbReference type="EC" id="7.4.2.11"/>
    </reaction>
</comment>
<comment type="subunit">
    <text evidence="1">The complex is composed of two ATP-binding proteins (MetN), two transmembrane proteins (MetI) and a solute-binding protein (MetQ).</text>
</comment>
<comment type="subcellular location">
    <subcellularLocation>
        <location evidence="1">Cell inner membrane</location>
        <topology evidence="1">Peripheral membrane protein</topology>
    </subcellularLocation>
</comment>
<comment type="similarity">
    <text evidence="1">Belongs to the ABC transporter superfamily. Methionine importer (TC 3.A.1.24) family.</text>
</comment>
<feature type="chain" id="PRO_0000270296" description="Methionine import ATP-binding protein MetN 3">
    <location>
        <begin position="1"/>
        <end position="343"/>
    </location>
</feature>
<feature type="domain" description="ABC transporter" evidence="1">
    <location>
        <begin position="2"/>
        <end position="241"/>
    </location>
</feature>
<feature type="binding site" evidence="1">
    <location>
        <begin position="38"/>
        <end position="45"/>
    </location>
    <ligand>
        <name>ATP</name>
        <dbReference type="ChEBI" id="CHEBI:30616"/>
    </ligand>
</feature>
<organism>
    <name type="scientific">Pectobacterium atrosepticum (strain SCRI 1043 / ATCC BAA-672)</name>
    <name type="common">Erwinia carotovora subsp. atroseptica</name>
    <dbReference type="NCBI Taxonomy" id="218491"/>
    <lineage>
        <taxon>Bacteria</taxon>
        <taxon>Pseudomonadati</taxon>
        <taxon>Pseudomonadota</taxon>
        <taxon>Gammaproteobacteria</taxon>
        <taxon>Enterobacterales</taxon>
        <taxon>Pectobacteriaceae</taxon>
        <taxon>Pectobacterium</taxon>
    </lineage>
</organism>
<accession>Q6D1C4</accession>
<reference key="1">
    <citation type="journal article" date="2004" name="Proc. Natl. Acad. Sci. U.S.A.">
        <title>Genome sequence of the enterobacterial phytopathogen Erwinia carotovora subsp. atroseptica and characterization of virulence factors.</title>
        <authorList>
            <person name="Bell K.S."/>
            <person name="Sebaihia M."/>
            <person name="Pritchard L."/>
            <person name="Holden M.T.G."/>
            <person name="Hyman L.J."/>
            <person name="Holeva M.C."/>
            <person name="Thomson N.R."/>
            <person name="Bentley S.D."/>
            <person name="Churcher L.J.C."/>
            <person name="Mungall K."/>
            <person name="Atkin R."/>
            <person name="Bason N."/>
            <person name="Brooks K."/>
            <person name="Chillingworth T."/>
            <person name="Clark K."/>
            <person name="Doggett J."/>
            <person name="Fraser A."/>
            <person name="Hance Z."/>
            <person name="Hauser H."/>
            <person name="Jagels K."/>
            <person name="Moule S."/>
            <person name="Norbertczak H."/>
            <person name="Ormond D."/>
            <person name="Price C."/>
            <person name="Quail M.A."/>
            <person name="Sanders M."/>
            <person name="Walker D."/>
            <person name="Whitehead S."/>
            <person name="Salmond G.P.C."/>
            <person name="Birch P.R.J."/>
            <person name="Parkhill J."/>
            <person name="Toth I.K."/>
        </authorList>
    </citation>
    <scope>NUCLEOTIDE SEQUENCE [LARGE SCALE GENOMIC DNA]</scope>
    <source>
        <strain>SCRI 1043 / ATCC BAA-672</strain>
    </source>
</reference>
<sequence>MIELSNITKVFQQNGRSITALADVSLHVPTGQIYGVIGASGAGKSTLIRCVNLLERPTEGKVLVDGQELTQLSDSQLTRARRQIGMIFQHFNLLSSRTVFGNISLPLELDNTPKADITKRVNELLELVGLADKHDVYPANLSGGQKQRVAIARALASNPKVLLCDEATSALDPATTRSILELLKDINRRLGLTILLITHEMDVVKRICDQVAVISDGRLIEKDTVSEVFSHPKTPLAQKFIQSTLHLDIPDDYLTRLSPDYHPDTTPLLRMEFTGKSVDAPLLSEVARRFNVNNNIISAQMDYAGGVKFGIMLAEMHGNNADIKDAIQFLQESHVTIEVLGYV</sequence>
<proteinExistence type="inferred from homology"/>
<evidence type="ECO:0000255" key="1">
    <source>
        <dbReference type="HAMAP-Rule" id="MF_01719"/>
    </source>
</evidence>